<feature type="chain" id="PRO_0000192016" description="Hydroxymethylpyrimidine/phosphomethylpyrimidine kinase">
    <location>
        <begin position="1"/>
        <end position="255"/>
    </location>
</feature>
<feature type="binding site" evidence="1">
    <location>
        <position position="41"/>
    </location>
    <ligand>
        <name>4-amino-5-hydroxymethyl-2-methylpyrimidine</name>
        <dbReference type="ChEBI" id="CHEBI:16892"/>
    </ligand>
</feature>
<keyword id="KW-0067">ATP-binding</keyword>
<keyword id="KW-0418">Kinase</keyword>
<keyword id="KW-0547">Nucleotide-binding</keyword>
<keyword id="KW-1185">Reference proteome</keyword>
<keyword id="KW-0784">Thiamine biosynthesis</keyword>
<keyword id="KW-0808">Transferase</keyword>
<proteinExistence type="inferred from homology"/>
<comment type="function">
    <text evidence="2">Catalyzes the phosphorylation of hydroxymethylpyrimidine phosphate (HMP-P) to HMP-PP, and of HMP to HMP-P.</text>
</comment>
<comment type="catalytic activity">
    <reaction evidence="2">
        <text>4-amino-5-hydroxymethyl-2-methylpyrimidine + ATP = 4-amino-2-methyl-5-(phosphooxymethyl)pyrimidine + ADP + H(+)</text>
        <dbReference type="Rhea" id="RHEA:23096"/>
        <dbReference type="ChEBI" id="CHEBI:15378"/>
        <dbReference type="ChEBI" id="CHEBI:16892"/>
        <dbReference type="ChEBI" id="CHEBI:30616"/>
        <dbReference type="ChEBI" id="CHEBI:58354"/>
        <dbReference type="ChEBI" id="CHEBI:456216"/>
        <dbReference type="EC" id="2.7.1.49"/>
    </reaction>
</comment>
<comment type="catalytic activity">
    <reaction evidence="2">
        <text>4-amino-2-methyl-5-(phosphooxymethyl)pyrimidine + ATP = 4-amino-2-methyl-5-(diphosphooxymethyl)pyrimidine + ADP</text>
        <dbReference type="Rhea" id="RHEA:19893"/>
        <dbReference type="ChEBI" id="CHEBI:30616"/>
        <dbReference type="ChEBI" id="CHEBI:57841"/>
        <dbReference type="ChEBI" id="CHEBI:58354"/>
        <dbReference type="ChEBI" id="CHEBI:456216"/>
        <dbReference type="EC" id="2.7.4.7"/>
    </reaction>
</comment>
<comment type="pathway">
    <text>Cofactor biosynthesis; thiamine diphosphate biosynthesis; 4-amino-2-methyl-5-diphosphomethylpyrimidine from 5-amino-1-(5-phospho-D-ribosyl)imidazole: step 2/3.</text>
</comment>
<comment type="pathway">
    <text>Cofactor biosynthesis; thiamine diphosphate biosynthesis; 4-amino-2-methyl-5-diphosphomethylpyrimidine from 5-amino-1-(5-phospho-D-ribosyl)imidazole: step 3/3.</text>
</comment>
<comment type="similarity">
    <text evidence="3">Belongs to the ThiD family.</text>
</comment>
<name>THID_AQUAE</name>
<dbReference type="EC" id="2.7.1.49" evidence="2"/>
<dbReference type="EC" id="2.7.4.7" evidence="2"/>
<dbReference type="EMBL" id="AE000657">
    <property type="protein sequence ID" value="AAC07733.1"/>
    <property type="molecule type" value="Genomic_DNA"/>
</dbReference>
<dbReference type="PIR" id="H70467">
    <property type="entry name" value="H70467"/>
</dbReference>
<dbReference type="RefSeq" id="NP_214341.1">
    <property type="nucleotide sequence ID" value="NC_000918.1"/>
</dbReference>
<dbReference type="RefSeq" id="WP_010881277.1">
    <property type="nucleotide sequence ID" value="NC_000918.1"/>
</dbReference>
<dbReference type="SMR" id="O67772"/>
<dbReference type="FunCoup" id="O67772">
    <property type="interactions" value="395"/>
</dbReference>
<dbReference type="STRING" id="224324.aq_1960"/>
<dbReference type="EnsemblBacteria" id="AAC07733">
    <property type="protein sequence ID" value="AAC07733"/>
    <property type="gene ID" value="aq_1960"/>
</dbReference>
<dbReference type="KEGG" id="aae:aq_1960"/>
<dbReference type="eggNOG" id="COG0351">
    <property type="taxonomic scope" value="Bacteria"/>
</dbReference>
<dbReference type="HOGENOM" id="CLU_020520_0_0_0"/>
<dbReference type="InParanoid" id="O67772"/>
<dbReference type="OrthoDB" id="9810880at2"/>
<dbReference type="UniPathway" id="UPA00060">
    <property type="reaction ID" value="UER00137"/>
</dbReference>
<dbReference type="UniPathway" id="UPA00060">
    <property type="reaction ID" value="UER00138"/>
</dbReference>
<dbReference type="Proteomes" id="UP000000798">
    <property type="component" value="Chromosome"/>
</dbReference>
<dbReference type="GO" id="GO:0005829">
    <property type="term" value="C:cytosol"/>
    <property type="evidence" value="ECO:0000318"/>
    <property type="project" value="GO_Central"/>
</dbReference>
<dbReference type="GO" id="GO:0005524">
    <property type="term" value="F:ATP binding"/>
    <property type="evidence" value="ECO:0007669"/>
    <property type="project" value="UniProtKB-KW"/>
</dbReference>
<dbReference type="GO" id="GO:0008902">
    <property type="term" value="F:hydroxymethylpyrimidine kinase activity"/>
    <property type="evidence" value="ECO:0000318"/>
    <property type="project" value="GO_Central"/>
</dbReference>
<dbReference type="GO" id="GO:0008972">
    <property type="term" value="F:phosphomethylpyrimidine kinase activity"/>
    <property type="evidence" value="ECO:0000318"/>
    <property type="project" value="GO_Central"/>
</dbReference>
<dbReference type="GO" id="GO:0009228">
    <property type="term" value="P:thiamine biosynthetic process"/>
    <property type="evidence" value="ECO:0000318"/>
    <property type="project" value="GO_Central"/>
</dbReference>
<dbReference type="GO" id="GO:0009229">
    <property type="term" value="P:thiamine diphosphate biosynthetic process"/>
    <property type="evidence" value="ECO:0007669"/>
    <property type="project" value="UniProtKB-UniPathway"/>
</dbReference>
<dbReference type="CDD" id="cd01169">
    <property type="entry name" value="HMPP_kinase"/>
    <property type="match status" value="1"/>
</dbReference>
<dbReference type="FunFam" id="3.40.1190.20:FF:000003">
    <property type="entry name" value="Phosphomethylpyrimidine kinase ThiD"/>
    <property type="match status" value="1"/>
</dbReference>
<dbReference type="Gene3D" id="3.40.1190.20">
    <property type="match status" value="1"/>
</dbReference>
<dbReference type="InterPro" id="IPR004399">
    <property type="entry name" value="HMP/HMP-P_kinase_dom"/>
</dbReference>
<dbReference type="InterPro" id="IPR013749">
    <property type="entry name" value="PM/HMP-P_kinase-1"/>
</dbReference>
<dbReference type="InterPro" id="IPR029056">
    <property type="entry name" value="Ribokinase-like"/>
</dbReference>
<dbReference type="NCBIfam" id="TIGR00097">
    <property type="entry name" value="HMP-P_kinase"/>
    <property type="match status" value="1"/>
</dbReference>
<dbReference type="PANTHER" id="PTHR20858:SF17">
    <property type="entry name" value="HYDROXYMETHYLPYRIMIDINE_PHOSPHOMETHYLPYRIMIDINE KINASE THI20-RELATED"/>
    <property type="match status" value="1"/>
</dbReference>
<dbReference type="PANTHER" id="PTHR20858">
    <property type="entry name" value="PHOSPHOMETHYLPYRIMIDINE KINASE"/>
    <property type="match status" value="1"/>
</dbReference>
<dbReference type="Pfam" id="PF08543">
    <property type="entry name" value="Phos_pyr_kin"/>
    <property type="match status" value="1"/>
</dbReference>
<dbReference type="SUPFAM" id="SSF53613">
    <property type="entry name" value="Ribokinase-like"/>
    <property type="match status" value="1"/>
</dbReference>
<accession>O67772</accession>
<organism>
    <name type="scientific">Aquifex aeolicus (strain VF5)</name>
    <dbReference type="NCBI Taxonomy" id="224324"/>
    <lineage>
        <taxon>Bacteria</taxon>
        <taxon>Pseudomonadati</taxon>
        <taxon>Aquificota</taxon>
        <taxon>Aquificia</taxon>
        <taxon>Aquificales</taxon>
        <taxon>Aquificaceae</taxon>
        <taxon>Aquifex</taxon>
    </lineage>
</organism>
<gene>
    <name type="primary">thiD</name>
    <name type="ordered locus">aq_1960</name>
</gene>
<reference key="1">
    <citation type="journal article" date="1998" name="Nature">
        <title>The complete genome of the hyperthermophilic bacterium Aquifex aeolicus.</title>
        <authorList>
            <person name="Deckert G."/>
            <person name="Warren P.V."/>
            <person name="Gaasterland T."/>
            <person name="Young W.G."/>
            <person name="Lenox A.L."/>
            <person name="Graham D.E."/>
            <person name="Overbeek R."/>
            <person name="Snead M.A."/>
            <person name="Keller M."/>
            <person name="Aujay M."/>
            <person name="Huber R."/>
            <person name="Feldman R.A."/>
            <person name="Short J.M."/>
            <person name="Olsen G.J."/>
            <person name="Swanson R.V."/>
        </authorList>
    </citation>
    <scope>NUCLEOTIDE SEQUENCE [LARGE SCALE GENOMIC DNA]</scope>
    <source>
        <strain>VF5</strain>
    </source>
</reference>
<sequence length="255" mass="28066">MIALSIAGFDNSGGAGTLADIRTFKHFGIYGVAVITALAVQNTQKVYEVFPIPPDVVKEELKAIFEDFPIKGVKIGMLANKEIAEVVYETLKSKKTNFIVLDPVFRSKSGRELLSEEGVEFLKSEFIKIVDLITPNVPEAEILCGEEIKSLEDVKNCAQKIYSLGAKSVLIKGGHLKGNYAIDILYDGKSFYEFKAPKIAGKTPRGTGCVYSSAILANYLRHKDLIKAIKTAKDFITEAIKNSKKLGKGYEIMDF</sequence>
<evidence type="ECO:0000250" key="1"/>
<evidence type="ECO:0000250" key="2">
    <source>
        <dbReference type="UniProtKB" id="P76422"/>
    </source>
</evidence>
<evidence type="ECO:0000305" key="3"/>
<protein>
    <recommendedName>
        <fullName>Hydroxymethylpyrimidine/phosphomethylpyrimidine kinase</fullName>
        <ecNumber evidence="2">2.7.1.49</ecNumber>
        <ecNumber evidence="2">2.7.4.7</ecNumber>
    </recommendedName>
    <alternativeName>
        <fullName>Hydroxymethylpyrimidine kinase</fullName>
        <shortName>HMP kinase</shortName>
    </alternativeName>
    <alternativeName>
        <fullName>Hydroxymethylpyrimidine phosphate kinase</fullName>
        <shortName>HMP-P kinase</shortName>
        <shortName>HMP-phosphate kinase</shortName>
        <shortName>HMPP kinase</shortName>
    </alternativeName>
</protein>